<evidence type="ECO:0000255" key="1">
    <source>
        <dbReference type="HAMAP-Rule" id="MF_04082"/>
    </source>
</evidence>
<dbReference type="EMBL" id="M17450">
    <property type="protein sequence ID" value="AAA45063.1"/>
    <property type="status" value="ALT_FRAME"/>
    <property type="molecule type" value="Genomic_RNA"/>
</dbReference>
<dbReference type="GO" id="GO:0033644">
    <property type="term" value="C:host cell membrane"/>
    <property type="evidence" value="ECO:0007669"/>
    <property type="project" value="UniProtKB-SubCell"/>
</dbReference>
<dbReference type="GO" id="GO:0016020">
    <property type="term" value="C:membrane"/>
    <property type="evidence" value="ECO:0007669"/>
    <property type="project" value="UniProtKB-UniRule"/>
</dbReference>
<dbReference type="GO" id="GO:0042609">
    <property type="term" value="F:CD4 receptor binding"/>
    <property type="evidence" value="ECO:0007669"/>
    <property type="project" value="UniProtKB-UniRule"/>
</dbReference>
<dbReference type="GO" id="GO:0005261">
    <property type="term" value="F:monoatomic cation channel activity"/>
    <property type="evidence" value="ECO:0007669"/>
    <property type="project" value="UniProtKB-UniRule"/>
</dbReference>
<dbReference type="GO" id="GO:0032801">
    <property type="term" value="P:receptor catabolic process"/>
    <property type="evidence" value="ECO:0007669"/>
    <property type="project" value="UniProtKB-UniRule"/>
</dbReference>
<dbReference type="GO" id="GO:0052170">
    <property type="term" value="P:symbiont-mediated suppression of host innate immune response"/>
    <property type="evidence" value="ECO:0007669"/>
    <property type="project" value="UniProtKB-KW"/>
</dbReference>
<dbReference type="GO" id="GO:0039502">
    <property type="term" value="P:symbiont-mediated suppression of host type I interferon-mediated signaling pathway"/>
    <property type="evidence" value="ECO:0007669"/>
    <property type="project" value="UniProtKB-UniRule"/>
</dbReference>
<dbReference type="GO" id="GO:0039587">
    <property type="term" value="P:symbiont-mediated-mediated suppression of host tetherin activity"/>
    <property type="evidence" value="ECO:0007669"/>
    <property type="project" value="UniProtKB-UniRule"/>
</dbReference>
<dbReference type="GO" id="GO:0019076">
    <property type="term" value="P:viral release from host cell"/>
    <property type="evidence" value="ECO:0007669"/>
    <property type="project" value="UniProtKB-UniRule"/>
</dbReference>
<dbReference type="Gene3D" id="1.10.195.10">
    <property type="entry name" value="HIV-1 VPU cytoplasmic domain"/>
    <property type="match status" value="1"/>
</dbReference>
<dbReference type="HAMAP" id="MF_04082">
    <property type="entry name" value="HIV_VPU"/>
    <property type="match status" value="1"/>
</dbReference>
<dbReference type="InterPro" id="IPR008187">
    <property type="entry name" value="Vpu"/>
</dbReference>
<dbReference type="InterPro" id="IPR009032">
    <property type="entry name" value="Vpu_cyt_dom_sf"/>
</dbReference>
<dbReference type="Pfam" id="PF00558">
    <property type="entry name" value="Vpu"/>
    <property type="match status" value="1"/>
</dbReference>
<dbReference type="SUPFAM" id="SSF57647">
    <property type="entry name" value="HIV-1 VPU cytoplasmic domain"/>
    <property type="match status" value="1"/>
</dbReference>
<organismHost>
    <name type="scientific">Homo sapiens</name>
    <name type="common">Human</name>
    <dbReference type="NCBI Taxonomy" id="9606"/>
</organismHost>
<organism>
    <name type="scientific">Human immunodeficiency virus type 1 group M subtype B (isolate SC)</name>
    <name type="common">HIV-1</name>
    <dbReference type="NCBI Taxonomy" id="11702"/>
    <lineage>
        <taxon>Viruses</taxon>
        <taxon>Riboviria</taxon>
        <taxon>Pararnavirae</taxon>
        <taxon>Artverviricota</taxon>
        <taxon>Revtraviricetes</taxon>
        <taxon>Ortervirales</taxon>
        <taxon>Retroviridae</taxon>
        <taxon>Orthoretrovirinae</taxon>
        <taxon>Lentivirus</taxon>
        <taxon>Human immunodeficiency virus type 1</taxon>
    </lineage>
</organism>
<gene>
    <name evidence="1" type="primary">vpu</name>
</gene>
<reference key="1">
    <citation type="journal article" date="1988" name="Virology">
        <title>Envelope sequences of two new United States HIV-1 isolates.</title>
        <authorList>
            <person name="Gurgo C."/>
            <person name="Guo H.-G."/>
            <person name="Franchini G."/>
            <person name="Aldovini A."/>
            <person name="Collalti E."/>
            <person name="Farrell K."/>
            <person name="Wong-Staal F."/>
            <person name="Gallo R.C."/>
            <person name="Reitz M.S. Jr."/>
        </authorList>
    </citation>
    <scope>NUCLEOTIDE SEQUENCE [GENOMIC RNA]</scope>
</reference>
<name>VPU_HV1SC</name>
<protein>
    <recommendedName>
        <fullName evidence="1">Protein Vpu</fullName>
    </recommendedName>
    <alternativeName>
        <fullName evidence="1">U ORF protein</fullName>
    </alternativeName>
    <alternativeName>
        <fullName evidence="1">Viral protein U</fullName>
    </alternativeName>
</protein>
<sequence length="81" mass="9116">MQPLQILSIVALVVAAIIAIVVWSIVFILIRKILRQRKIDRLIDRIRERAEDSGNESEGIRKELSALVEMGHDAPGDIDDL</sequence>
<accession>P05948</accession>
<comment type="function">
    <text evidence="1">Enhances virion budding by targeting host CD4 and Tetherin/BST2 to proteasome degradation. Degradation of CD4 prevents any unwanted premature interactions between viral Env and its host receptor CD4 in the endoplasmic reticulum. Degradation of antiretroviral protein Tetherin/BST2 is important for virion budding, as BST2 tethers new viral particles to the host cell membrane. Mechanistically, Vpu bridges either CD4 or BST2 to BTRC, a substrate recognition subunit of the Skp1/Cullin/F-box protein E3 ubiquitin ligase, induces their ubiquitination and subsequent proteasomal degradation. The alteration of the E3 ligase specificity by Vpu seems to promote the degradation of host IKBKB, leading to NF-kappa-B down-regulation and subsequent apoptosis. Acts as a viroporin that forms an oligomeric ion channel in membranes. Modulates the host DNA repair mechanisms to promote degradation of nuclear viral cDNA in cells that are already productively infected in order to suppress immune sensing and proviral hyper-integration (superinfection). Manipulates PML-NBs and modulates SUMOylation of host BLM protein thereby enhancing its DNA-end processing activity toward viral unintegrated linear DNA. Also inhibits RAD52-mediated homologous repair of viral cDNA, preventing the generation of dead-end circular forms of single copies of the long terminal repeat and permitting sustained nucleolytic attack.</text>
</comment>
<comment type="activity regulation">
    <text evidence="1">Ion channel activity is inhibited by hexamethylene amiloride in vitro.</text>
</comment>
<comment type="subunit">
    <text evidence="1">Homopentamer. Interacts with host CD4 and BRTC; these interactions induce proteasomal degradation of CD4. Interacts with host BST2; this interaction leads to the degradation of host BST2. Interacts with host FBXW11. Interacts with host AP1M1; this interaction plays a role in the mistrafficking and subsequent degradation of host BST2. Interacts with host RANBP2; this interaction allows Vpu to down-regulate host BLM sumoylation.</text>
</comment>
<comment type="subcellular location">
    <subcellularLocation>
        <location evidence="1">Host membrane</location>
        <topology evidence="1">Single-pass type I membrane protein</topology>
    </subcellularLocation>
</comment>
<comment type="domain">
    <text evidence="1">The N-terminus and transmembrane domains are required for self-oligomerization and proper virion budding, whereas the cytoplasmic domain is required for CD4 degradation. The cytoplasmic domain is composed of 2 amphipathic alpha helix that form a U-shape.</text>
</comment>
<comment type="PTM">
    <text evidence="1">Phosphorylated by host CK2. This phosphorylation is necessary for interaction with human BTRC and degradation of CD4.</text>
</comment>
<comment type="miscellaneous">
    <text evidence="1">HIV-1 lineages are divided in three main groups, M (for Major), O (for Outlier), and N (for New, or Non-M, Non-O). The vast majority of strains found worldwide belong to the group M. Group O seems to be endemic to and largely confined to Cameroon and neighboring countries in West Central Africa, where these viruses represent a small minority of HIV-1 strains. The group N is represented by a limited number of isolates from Cameroonian persons. The group M is further subdivided in 9 clades or subtypes (A to D, F to H, J and K).</text>
</comment>
<comment type="similarity">
    <text evidence="1">Belongs to the HIV-1 VPU protein family.</text>
</comment>
<comment type="sequence caution">
    <conflict type="frameshift">
        <sequence resource="EMBL-CDS" id="AAA45063"/>
    </conflict>
</comment>
<proteinExistence type="inferred from homology"/>
<feature type="chain" id="PRO_0000085431" description="Protein Vpu">
    <location>
        <begin position="1"/>
        <end position="81"/>
    </location>
</feature>
<feature type="topological domain" description="Extracellular" evidence="1">
    <location>
        <begin position="1"/>
        <end position="7"/>
    </location>
</feature>
<feature type="transmembrane region" description="Helical" evidence="1">
    <location>
        <begin position="8"/>
        <end position="28"/>
    </location>
</feature>
<feature type="topological domain" description="Cytoplasmic" evidence="1">
    <location>
        <begin position="29"/>
        <end position="81"/>
    </location>
</feature>
<feature type="modified residue" description="Phosphoserine; by host CK2" evidence="1">
    <location>
        <position position="53"/>
    </location>
</feature>
<feature type="modified residue" description="Phosphoserine; by host CK2" evidence="1">
    <location>
        <position position="57"/>
    </location>
</feature>
<keyword id="KW-0014">AIDS</keyword>
<keyword id="KW-0053">Apoptosis</keyword>
<keyword id="KW-1043">Host membrane</keyword>
<keyword id="KW-0945">Host-virus interaction</keyword>
<keyword id="KW-1090">Inhibition of host innate immune response by virus</keyword>
<keyword id="KW-1084">Inhibition of host tetherin by virus</keyword>
<keyword id="KW-0407">Ion channel</keyword>
<keyword id="KW-0406">Ion transport</keyword>
<keyword id="KW-0472">Membrane</keyword>
<keyword id="KW-0597">Phosphoprotein</keyword>
<keyword id="KW-0812">Transmembrane</keyword>
<keyword id="KW-1133">Transmembrane helix</keyword>
<keyword id="KW-0813">Transport</keyword>
<keyword id="KW-0899">Viral immunoevasion</keyword>